<name>RBL_SESIN</name>
<organism>
    <name type="scientific">Sesamum indicum</name>
    <name type="common">Oriental sesame</name>
    <name type="synonym">Sesamum orientale</name>
    <dbReference type="NCBI Taxonomy" id="4182"/>
    <lineage>
        <taxon>Eukaryota</taxon>
        <taxon>Viridiplantae</taxon>
        <taxon>Streptophyta</taxon>
        <taxon>Embryophyta</taxon>
        <taxon>Tracheophyta</taxon>
        <taxon>Spermatophyta</taxon>
        <taxon>Magnoliopsida</taxon>
        <taxon>eudicotyledons</taxon>
        <taxon>Gunneridae</taxon>
        <taxon>Pentapetalae</taxon>
        <taxon>asterids</taxon>
        <taxon>lamiids</taxon>
        <taxon>Lamiales</taxon>
        <taxon>Pedaliaceae</taxon>
        <taxon>Sesamum</taxon>
    </lineage>
</organism>
<protein>
    <recommendedName>
        <fullName evidence="1">Ribulose bisphosphate carboxylase large chain</fullName>
        <shortName evidence="1">RuBisCO large subunit</shortName>
        <ecNumber evidence="1">4.1.1.39</ecNumber>
    </recommendedName>
</protein>
<reference key="1">
    <citation type="journal article" date="1993" name="Ann. Mo. Bot. Gard.">
        <title>A parsimony analysis of the Asteridae sensu lato based on rbcL sequences.</title>
        <authorList>
            <person name="Olmstead R.G."/>
            <person name="Bremer B."/>
            <person name="Scott K.M."/>
            <person name="Palmer J.D."/>
        </authorList>
        <dbReference type="AGRICOLA" id="IND93053816"/>
    </citation>
    <scope>NUCLEOTIDE SEQUENCE [GENOMIC DNA]</scope>
</reference>
<proteinExistence type="inferred from homology"/>
<comment type="function">
    <text evidence="1">RuBisCO catalyzes two reactions: the carboxylation of D-ribulose 1,5-bisphosphate, the primary event in carbon dioxide fixation, as well as the oxidative fragmentation of the pentose substrate in the photorespiration process. Both reactions occur simultaneously and in competition at the same active site.</text>
</comment>
<comment type="catalytic activity">
    <reaction evidence="1">
        <text>2 (2R)-3-phosphoglycerate + 2 H(+) = D-ribulose 1,5-bisphosphate + CO2 + H2O</text>
        <dbReference type="Rhea" id="RHEA:23124"/>
        <dbReference type="ChEBI" id="CHEBI:15377"/>
        <dbReference type="ChEBI" id="CHEBI:15378"/>
        <dbReference type="ChEBI" id="CHEBI:16526"/>
        <dbReference type="ChEBI" id="CHEBI:57870"/>
        <dbReference type="ChEBI" id="CHEBI:58272"/>
        <dbReference type="EC" id="4.1.1.39"/>
    </reaction>
</comment>
<comment type="catalytic activity">
    <reaction evidence="1">
        <text>D-ribulose 1,5-bisphosphate + O2 = 2-phosphoglycolate + (2R)-3-phosphoglycerate + 2 H(+)</text>
        <dbReference type="Rhea" id="RHEA:36631"/>
        <dbReference type="ChEBI" id="CHEBI:15378"/>
        <dbReference type="ChEBI" id="CHEBI:15379"/>
        <dbReference type="ChEBI" id="CHEBI:57870"/>
        <dbReference type="ChEBI" id="CHEBI:58033"/>
        <dbReference type="ChEBI" id="CHEBI:58272"/>
    </reaction>
</comment>
<comment type="cofactor">
    <cofactor evidence="1">
        <name>Mg(2+)</name>
        <dbReference type="ChEBI" id="CHEBI:18420"/>
    </cofactor>
    <text evidence="1">Binds 1 Mg(2+) ion per subunit.</text>
</comment>
<comment type="subunit">
    <text evidence="1">Heterohexadecamer of 8 large chains and 8 small chains; disulfide-linked. The disulfide link is formed within the large subunit homodimers.</text>
</comment>
<comment type="subcellular location">
    <subcellularLocation>
        <location>Plastid</location>
        <location>Chloroplast</location>
    </subcellularLocation>
</comment>
<comment type="PTM">
    <text evidence="1">The disulfide bond which can form in the large chain dimeric partners within the hexadecamer appears to be associated with oxidative stress and protein turnover.</text>
</comment>
<comment type="miscellaneous">
    <text evidence="1">The basic functional RuBisCO is composed of a large chain homodimer in a 'head-to-tail' conformation. In form I RuBisCO this homodimer is arranged in a barrel-like tetramer with the small subunits forming a tetrameric 'cap' on each end of the 'barrel'.</text>
</comment>
<comment type="similarity">
    <text evidence="1">Belongs to the RuBisCO large chain family. Type I subfamily.</text>
</comment>
<dbReference type="EC" id="4.1.1.39" evidence="1"/>
<dbReference type="EMBL" id="L14408">
    <property type="protein sequence ID" value="AAA19769.1"/>
    <property type="molecule type" value="Genomic_DNA"/>
</dbReference>
<dbReference type="Proteomes" id="UP000504604">
    <property type="component" value="Unplaced"/>
</dbReference>
<dbReference type="GO" id="GO:0009507">
    <property type="term" value="C:chloroplast"/>
    <property type="evidence" value="ECO:0007669"/>
    <property type="project" value="UniProtKB-SubCell"/>
</dbReference>
<dbReference type="GO" id="GO:0000287">
    <property type="term" value="F:magnesium ion binding"/>
    <property type="evidence" value="ECO:0007669"/>
    <property type="project" value="InterPro"/>
</dbReference>
<dbReference type="GO" id="GO:0004497">
    <property type="term" value="F:monooxygenase activity"/>
    <property type="evidence" value="ECO:0007669"/>
    <property type="project" value="UniProtKB-KW"/>
</dbReference>
<dbReference type="GO" id="GO:0016984">
    <property type="term" value="F:ribulose-bisphosphate carboxylase activity"/>
    <property type="evidence" value="ECO:0007669"/>
    <property type="project" value="UniProtKB-EC"/>
</dbReference>
<dbReference type="GO" id="GO:0009853">
    <property type="term" value="P:photorespiration"/>
    <property type="evidence" value="ECO:0007669"/>
    <property type="project" value="UniProtKB-KW"/>
</dbReference>
<dbReference type="GO" id="GO:0019253">
    <property type="term" value="P:reductive pentose-phosphate cycle"/>
    <property type="evidence" value="ECO:0007669"/>
    <property type="project" value="UniProtKB-KW"/>
</dbReference>
<dbReference type="CDD" id="cd08212">
    <property type="entry name" value="RuBisCO_large_I"/>
    <property type="match status" value="1"/>
</dbReference>
<dbReference type="FunFam" id="3.20.20.110:FF:000001">
    <property type="entry name" value="Ribulose bisphosphate carboxylase large chain"/>
    <property type="match status" value="1"/>
</dbReference>
<dbReference type="Gene3D" id="3.20.20.110">
    <property type="entry name" value="Ribulose bisphosphate carboxylase, large subunit, C-terminal domain"/>
    <property type="match status" value="1"/>
</dbReference>
<dbReference type="Gene3D" id="3.30.70.150">
    <property type="entry name" value="RuBisCO large subunit, N-terminal domain"/>
    <property type="match status" value="1"/>
</dbReference>
<dbReference type="HAMAP" id="MF_01338">
    <property type="entry name" value="RuBisCO_L_type1"/>
    <property type="match status" value="1"/>
</dbReference>
<dbReference type="InterPro" id="IPR033966">
    <property type="entry name" value="RuBisCO"/>
</dbReference>
<dbReference type="InterPro" id="IPR020878">
    <property type="entry name" value="RuBisCo_large_chain_AS"/>
</dbReference>
<dbReference type="InterPro" id="IPR000685">
    <property type="entry name" value="RuBisCO_lsu_C"/>
</dbReference>
<dbReference type="InterPro" id="IPR036376">
    <property type="entry name" value="RuBisCO_lsu_C_sf"/>
</dbReference>
<dbReference type="InterPro" id="IPR017443">
    <property type="entry name" value="RuBisCO_lsu_fd_N"/>
</dbReference>
<dbReference type="InterPro" id="IPR036422">
    <property type="entry name" value="RuBisCO_lsu_N_sf"/>
</dbReference>
<dbReference type="InterPro" id="IPR020888">
    <property type="entry name" value="RuBisCO_lsuI"/>
</dbReference>
<dbReference type="NCBIfam" id="NF003252">
    <property type="entry name" value="PRK04208.1"/>
    <property type="match status" value="1"/>
</dbReference>
<dbReference type="PANTHER" id="PTHR42704">
    <property type="entry name" value="RIBULOSE BISPHOSPHATE CARBOXYLASE"/>
    <property type="match status" value="1"/>
</dbReference>
<dbReference type="PANTHER" id="PTHR42704:SF15">
    <property type="entry name" value="RIBULOSE BISPHOSPHATE CARBOXYLASE LARGE CHAIN"/>
    <property type="match status" value="1"/>
</dbReference>
<dbReference type="Pfam" id="PF00016">
    <property type="entry name" value="RuBisCO_large"/>
    <property type="match status" value="1"/>
</dbReference>
<dbReference type="Pfam" id="PF02788">
    <property type="entry name" value="RuBisCO_large_N"/>
    <property type="match status" value="1"/>
</dbReference>
<dbReference type="SFLD" id="SFLDG01052">
    <property type="entry name" value="RuBisCO"/>
    <property type="match status" value="1"/>
</dbReference>
<dbReference type="SFLD" id="SFLDS00014">
    <property type="entry name" value="RuBisCO"/>
    <property type="match status" value="1"/>
</dbReference>
<dbReference type="SFLD" id="SFLDG00301">
    <property type="entry name" value="RuBisCO-like_proteins"/>
    <property type="match status" value="1"/>
</dbReference>
<dbReference type="SUPFAM" id="SSF51649">
    <property type="entry name" value="RuBisCo, C-terminal domain"/>
    <property type="match status" value="1"/>
</dbReference>
<dbReference type="SUPFAM" id="SSF54966">
    <property type="entry name" value="RuBisCO, large subunit, small (N-terminal) domain"/>
    <property type="match status" value="1"/>
</dbReference>
<dbReference type="PROSITE" id="PS00157">
    <property type="entry name" value="RUBISCO_LARGE"/>
    <property type="match status" value="1"/>
</dbReference>
<evidence type="ECO:0000255" key="1">
    <source>
        <dbReference type="HAMAP-Rule" id="MF_01338"/>
    </source>
</evidence>
<keyword id="KW-0113">Calvin cycle</keyword>
<keyword id="KW-0120">Carbon dioxide fixation</keyword>
<keyword id="KW-0150">Chloroplast</keyword>
<keyword id="KW-1015">Disulfide bond</keyword>
<keyword id="KW-0456">Lyase</keyword>
<keyword id="KW-0460">Magnesium</keyword>
<keyword id="KW-0479">Metal-binding</keyword>
<keyword id="KW-0503">Monooxygenase</keyword>
<keyword id="KW-0560">Oxidoreductase</keyword>
<keyword id="KW-0601">Photorespiration</keyword>
<keyword id="KW-0602">Photosynthesis</keyword>
<keyword id="KW-0934">Plastid</keyword>
<keyword id="KW-1185">Reference proteome</keyword>
<feature type="chain" id="PRO_0000062594" description="Ribulose bisphosphate carboxylase large chain">
    <location>
        <begin position="1" status="less than"/>
        <end position="443"/>
    </location>
</feature>
<feature type="active site" description="Proton acceptor" evidence="1">
    <location>
        <position position="141"/>
    </location>
</feature>
<feature type="active site" description="Proton acceptor" evidence="1">
    <location>
        <position position="260"/>
    </location>
</feature>
<feature type="binding site" description="in homodimeric partner" evidence="1">
    <location>
        <position position="89"/>
    </location>
    <ligand>
        <name>substrate</name>
    </ligand>
</feature>
<feature type="binding site" evidence="1">
    <location>
        <position position="139"/>
    </location>
    <ligand>
        <name>substrate</name>
    </ligand>
</feature>
<feature type="binding site" evidence="1">
    <location>
        <position position="143"/>
    </location>
    <ligand>
        <name>substrate</name>
    </ligand>
</feature>
<feature type="binding site" description="via carbamate group" evidence="1">
    <location>
        <position position="167"/>
    </location>
    <ligand>
        <name>Mg(2+)</name>
        <dbReference type="ChEBI" id="CHEBI:18420"/>
    </ligand>
</feature>
<feature type="binding site" evidence="1">
    <location>
        <position position="169"/>
    </location>
    <ligand>
        <name>Mg(2+)</name>
        <dbReference type="ChEBI" id="CHEBI:18420"/>
    </ligand>
</feature>
<feature type="binding site" evidence="1">
    <location>
        <position position="170"/>
    </location>
    <ligand>
        <name>Mg(2+)</name>
        <dbReference type="ChEBI" id="CHEBI:18420"/>
    </ligand>
</feature>
<feature type="binding site" evidence="1">
    <location>
        <position position="261"/>
    </location>
    <ligand>
        <name>substrate</name>
    </ligand>
</feature>
<feature type="binding site" evidence="1">
    <location>
        <position position="293"/>
    </location>
    <ligand>
        <name>substrate</name>
    </ligand>
</feature>
<feature type="binding site" evidence="1">
    <location>
        <position position="345"/>
    </location>
    <ligand>
        <name>substrate</name>
    </ligand>
</feature>
<feature type="site" description="Transition state stabilizer" evidence="1">
    <location>
        <position position="300"/>
    </location>
</feature>
<feature type="modified residue" description="N6-carboxylysine" evidence="1">
    <location>
        <position position="167"/>
    </location>
</feature>
<feature type="disulfide bond" description="Interchain; in linked form" evidence="1">
    <location>
        <position position="213"/>
    </location>
</feature>
<feature type="non-terminal residue">
    <location>
        <position position="1"/>
    </location>
</feature>
<accession>P36487</accession>
<gene>
    <name evidence="1" type="primary">rbcL</name>
</gene>
<sequence>DILAAFRVTPQPGVPPEEAGXXVAAESSTGTWTTVWTDGLTSLDRYKGRCYNIEPVPGETDQYICYVAYPLDLFEEGSVTNMFTSIVGNVFGFKALRALRLEDLRIPTAYVKTFQGPPHGIQVERDKLNKYGRPLLGCTIKPKLGLSAKNYGRACYECLRGGLDFTKDDENVNSQPFMRWRDRFLFCAEAIYKAQAETGEIKGHYLNATAGTCEEMMKRAIFARELGVPIIMHDYLTGGFTANTSLAHYCRDNGLLLHIHRAMHAVIDRQKNHGMXFRVLXKALRMSGGDHIHSGTVVGKLEGERDITLGFVDLLRDDFVEKDRSRGIYFTQDWVSLPGVIPVASGGIHVWHMPALTEIFGDDSVLQFGGGTLGHPWGNAPGAVANRVALXXXXXXXNXGXDLAAEGNAIIREASKWSPELAAACEVWKEIKFKFKAVDTLDK</sequence>
<geneLocation type="chloroplast"/>